<protein>
    <recommendedName>
        <fullName evidence="1">tRNA dimethylallyltransferase</fullName>
        <ecNumber evidence="1">2.5.1.75</ecNumber>
    </recommendedName>
    <alternativeName>
        <fullName evidence="1">Dimethylallyl diphosphate:tRNA dimethylallyltransferase</fullName>
        <shortName evidence="1">DMAPP:tRNA dimethylallyltransferase</shortName>
        <shortName evidence="1">DMATase</shortName>
    </alternativeName>
    <alternativeName>
        <fullName evidence="1">Isopentenyl-diphosphate:tRNA isopentenyltransferase</fullName>
        <shortName evidence="1">IPP transferase</shortName>
        <shortName evidence="1">IPPT</shortName>
        <shortName evidence="1">IPTase</shortName>
    </alternativeName>
</protein>
<evidence type="ECO:0000255" key="1">
    <source>
        <dbReference type="HAMAP-Rule" id="MF_00185"/>
    </source>
</evidence>
<gene>
    <name evidence="1" type="primary">miaA</name>
    <name type="ordered locus">Aflv_1518</name>
</gene>
<keyword id="KW-0067">ATP-binding</keyword>
<keyword id="KW-0460">Magnesium</keyword>
<keyword id="KW-0547">Nucleotide-binding</keyword>
<keyword id="KW-0808">Transferase</keyword>
<keyword id="KW-0819">tRNA processing</keyword>
<dbReference type="EC" id="2.5.1.75" evidence="1"/>
<dbReference type="EMBL" id="CP000922">
    <property type="protein sequence ID" value="ACJ33884.1"/>
    <property type="molecule type" value="Genomic_DNA"/>
</dbReference>
<dbReference type="RefSeq" id="WP_012575113.1">
    <property type="nucleotide sequence ID" value="NC_011567.1"/>
</dbReference>
<dbReference type="SMR" id="B7GIA2"/>
<dbReference type="STRING" id="491915.Aflv_1518"/>
<dbReference type="GeneID" id="7037773"/>
<dbReference type="KEGG" id="afl:Aflv_1518"/>
<dbReference type="PATRIC" id="fig|491915.6.peg.1563"/>
<dbReference type="eggNOG" id="COG0324">
    <property type="taxonomic scope" value="Bacteria"/>
</dbReference>
<dbReference type="HOGENOM" id="CLU_032616_0_1_9"/>
<dbReference type="Proteomes" id="UP000000742">
    <property type="component" value="Chromosome"/>
</dbReference>
<dbReference type="GO" id="GO:0005524">
    <property type="term" value="F:ATP binding"/>
    <property type="evidence" value="ECO:0007669"/>
    <property type="project" value="UniProtKB-UniRule"/>
</dbReference>
<dbReference type="GO" id="GO:0052381">
    <property type="term" value="F:tRNA dimethylallyltransferase activity"/>
    <property type="evidence" value="ECO:0007669"/>
    <property type="project" value="UniProtKB-UniRule"/>
</dbReference>
<dbReference type="GO" id="GO:0006400">
    <property type="term" value="P:tRNA modification"/>
    <property type="evidence" value="ECO:0007669"/>
    <property type="project" value="TreeGrafter"/>
</dbReference>
<dbReference type="Gene3D" id="1.10.20.140">
    <property type="match status" value="1"/>
</dbReference>
<dbReference type="Gene3D" id="3.40.50.300">
    <property type="entry name" value="P-loop containing nucleotide triphosphate hydrolases"/>
    <property type="match status" value="1"/>
</dbReference>
<dbReference type="HAMAP" id="MF_00185">
    <property type="entry name" value="IPP_trans"/>
    <property type="match status" value="1"/>
</dbReference>
<dbReference type="InterPro" id="IPR039657">
    <property type="entry name" value="Dimethylallyltransferase"/>
</dbReference>
<dbReference type="InterPro" id="IPR018022">
    <property type="entry name" value="IPT"/>
</dbReference>
<dbReference type="InterPro" id="IPR027417">
    <property type="entry name" value="P-loop_NTPase"/>
</dbReference>
<dbReference type="NCBIfam" id="TIGR00174">
    <property type="entry name" value="miaA"/>
    <property type="match status" value="1"/>
</dbReference>
<dbReference type="PANTHER" id="PTHR11088">
    <property type="entry name" value="TRNA DIMETHYLALLYLTRANSFERASE"/>
    <property type="match status" value="1"/>
</dbReference>
<dbReference type="PANTHER" id="PTHR11088:SF60">
    <property type="entry name" value="TRNA DIMETHYLALLYLTRANSFERASE"/>
    <property type="match status" value="1"/>
</dbReference>
<dbReference type="Pfam" id="PF01715">
    <property type="entry name" value="IPPT"/>
    <property type="match status" value="1"/>
</dbReference>
<dbReference type="SUPFAM" id="SSF52540">
    <property type="entry name" value="P-loop containing nucleoside triphosphate hydrolases"/>
    <property type="match status" value="2"/>
</dbReference>
<feature type="chain" id="PRO_1000118515" description="tRNA dimethylallyltransferase">
    <location>
        <begin position="1"/>
        <end position="311"/>
    </location>
</feature>
<feature type="region of interest" description="Interaction with substrate tRNA" evidence="1">
    <location>
        <begin position="35"/>
        <end position="38"/>
    </location>
</feature>
<feature type="binding site" evidence="1">
    <location>
        <begin position="10"/>
        <end position="17"/>
    </location>
    <ligand>
        <name>ATP</name>
        <dbReference type="ChEBI" id="CHEBI:30616"/>
    </ligand>
</feature>
<feature type="binding site" evidence="1">
    <location>
        <begin position="12"/>
        <end position="17"/>
    </location>
    <ligand>
        <name>substrate</name>
    </ligand>
</feature>
<feature type="site" description="Interaction with substrate tRNA" evidence="1">
    <location>
        <position position="101"/>
    </location>
</feature>
<sequence>MGEKVVVLIGPTAVGKTKMSIQLAKRLNGEIINGDSMQVYKGLDIGTAKIRQEETEGIPHHLLDIKEPHESFSVAEFQTLARSLIKDITKRGKLPIIVGGTGLYIQSVIYDYQFSDAPSNDLYRQSLERCSPDELYEQLKQIDPLSAERIHPNNVRRVIRALEIYHCTGKTMTEWLKEQKRQLVYNVALIGLTMEREKLYARINQRVDQMIDQGLIEEVKRLYEQGLRDCQAIQAIGYKELYAYFDGMLTLKEAIEQLKQNSRRYAKRQFTWFRNQMPVQWFDMTDDTIFERRVNEILHYIEGKFHFQSNM</sequence>
<accession>B7GIA2</accession>
<organism>
    <name type="scientific">Anoxybacillus flavithermus (strain DSM 21510 / WK1)</name>
    <dbReference type="NCBI Taxonomy" id="491915"/>
    <lineage>
        <taxon>Bacteria</taxon>
        <taxon>Bacillati</taxon>
        <taxon>Bacillota</taxon>
        <taxon>Bacilli</taxon>
        <taxon>Bacillales</taxon>
        <taxon>Anoxybacillaceae</taxon>
        <taxon>Anoxybacillus</taxon>
    </lineage>
</organism>
<proteinExistence type="inferred from homology"/>
<name>MIAA_ANOFW</name>
<comment type="function">
    <text evidence="1">Catalyzes the transfer of a dimethylallyl group onto the adenine at position 37 in tRNAs that read codons beginning with uridine, leading to the formation of N6-(dimethylallyl)adenosine (i(6)A).</text>
</comment>
<comment type="catalytic activity">
    <reaction evidence="1">
        <text>adenosine(37) in tRNA + dimethylallyl diphosphate = N(6)-dimethylallyladenosine(37) in tRNA + diphosphate</text>
        <dbReference type="Rhea" id="RHEA:26482"/>
        <dbReference type="Rhea" id="RHEA-COMP:10162"/>
        <dbReference type="Rhea" id="RHEA-COMP:10375"/>
        <dbReference type="ChEBI" id="CHEBI:33019"/>
        <dbReference type="ChEBI" id="CHEBI:57623"/>
        <dbReference type="ChEBI" id="CHEBI:74411"/>
        <dbReference type="ChEBI" id="CHEBI:74415"/>
        <dbReference type="EC" id="2.5.1.75"/>
    </reaction>
</comment>
<comment type="cofactor">
    <cofactor evidence="1">
        <name>Mg(2+)</name>
        <dbReference type="ChEBI" id="CHEBI:18420"/>
    </cofactor>
</comment>
<comment type="subunit">
    <text evidence="1">Monomer.</text>
</comment>
<comment type="similarity">
    <text evidence="1">Belongs to the IPP transferase family.</text>
</comment>
<reference key="1">
    <citation type="journal article" date="2008" name="Genome Biol.">
        <title>Encapsulated in silica: genome, proteome and physiology of the thermophilic bacterium Anoxybacillus flavithermus WK1.</title>
        <authorList>
            <person name="Saw J.H."/>
            <person name="Mountain B.W."/>
            <person name="Feng L."/>
            <person name="Omelchenko M.V."/>
            <person name="Hou S."/>
            <person name="Saito J.A."/>
            <person name="Stott M.B."/>
            <person name="Li D."/>
            <person name="Zhao G."/>
            <person name="Wu J."/>
            <person name="Galperin M.Y."/>
            <person name="Koonin E.V."/>
            <person name="Makarova K.S."/>
            <person name="Wolf Y.I."/>
            <person name="Rigden D.J."/>
            <person name="Dunfield P.F."/>
            <person name="Wang L."/>
            <person name="Alam M."/>
        </authorList>
    </citation>
    <scope>NUCLEOTIDE SEQUENCE [LARGE SCALE GENOMIC DNA]</scope>
    <source>
        <strain>DSM 21510 / WK1</strain>
    </source>
</reference>